<gene>
    <name type="primary">metG</name>
    <name type="synonym">metS</name>
    <name type="ordered locus">TTHA1298</name>
</gene>
<protein>
    <recommendedName>
        <fullName>Methionine--tRNA ligase</fullName>
        <ecNumber>6.1.1.10</ecNumber>
    </recommendedName>
    <alternativeName>
        <fullName>Methionyl-tRNA synthetase</fullName>
        <shortName>MetRS</shortName>
    </alternativeName>
</protein>
<organism>
    <name type="scientific">Thermus thermophilus (strain ATCC 27634 / DSM 579 / HB8)</name>
    <dbReference type="NCBI Taxonomy" id="300852"/>
    <lineage>
        <taxon>Bacteria</taxon>
        <taxon>Thermotogati</taxon>
        <taxon>Deinococcota</taxon>
        <taxon>Deinococci</taxon>
        <taxon>Thermales</taxon>
        <taxon>Thermaceae</taxon>
        <taxon>Thermus</taxon>
    </lineage>
</organism>
<name>SYM_THET8</name>
<reference key="1">
    <citation type="journal article" date="1991" name="J. Biol. Chem.">
        <title>Methionyl-tRNA synthetase gene from an extreme thermophile, Thermus thermophilus HB8. Molecular cloning, primary-structure analysis, expression in Escherichia coli, and site-directed mutagenesis.</title>
        <authorList>
            <person name="Nureki O."/>
            <person name="Muramatsu T."/>
            <person name="Suzuki K."/>
            <person name="Kohda D."/>
            <person name="Matsuzawa H."/>
            <person name="Ohta T."/>
            <person name="Miyazawa T."/>
            <person name="Yokoyama S."/>
        </authorList>
    </citation>
    <scope>NUCLEOTIDE SEQUENCE [GENOMIC DNA]</scope>
</reference>
<reference key="2">
    <citation type="submission" date="2004-11" db="EMBL/GenBank/DDBJ databases">
        <title>Complete genome sequence of Thermus thermophilus HB8.</title>
        <authorList>
            <person name="Masui R."/>
            <person name="Kurokawa K."/>
            <person name="Nakagawa N."/>
            <person name="Tokunaga F."/>
            <person name="Koyama Y."/>
            <person name="Shibata T."/>
            <person name="Oshima T."/>
            <person name="Yokoyama S."/>
            <person name="Yasunaga T."/>
            <person name="Kuramitsu S."/>
        </authorList>
    </citation>
    <scope>NUCLEOTIDE SEQUENCE [LARGE SCALE GENOMIC DNA]</scope>
    <source>
        <strain>ATCC 27634 / DSM 579 / HB8</strain>
    </source>
</reference>
<reference key="3">
    <citation type="journal article" date="2000" name="Structure">
        <title>The 2.0-A crystal structure of Thermus thermophilus methionyl-tRNA synthetase reveals two RNA-binding modules.</title>
        <authorList>
            <person name="Sugiura I."/>
            <person name="Nureki O."/>
            <person name="Ugaji-Yoshikawa Y."/>
            <person name="Kuwabara S."/>
            <person name="Shimada A."/>
            <person name="Tateno M."/>
            <person name="Lorber B."/>
            <person name="Giege R."/>
            <person name="Moras D."/>
            <person name="Yokoyama S."/>
            <person name="Konno M."/>
        </authorList>
    </citation>
    <scope>X-RAY CRYSTALLOGRAPHY (2.0 ANGSTROMS)</scope>
</reference>
<accession>P23395</accession>
<accession>Q5SIR6</accession>
<keyword id="KW-0002">3D-structure</keyword>
<keyword id="KW-0030">Aminoacyl-tRNA synthetase</keyword>
<keyword id="KW-0067">ATP-binding</keyword>
<keyword id="KW-0963">Cytoplasm</keyword>
<keyword id="KW-0436">Ligase</keyword>
<keyword id="KW-0479">Metal-binding</keyword>
<keyword id="KW-0547">Nucleotide-binding</keyword>
<keyword id="KW-0648">Protein biosynthesis</keyword>
<keyword id="KW-1185">Reference proteome</keyword>
<keyword id="KW-0694">RNA-binding</keyword>
<keyword id="KW-0820">tRNA-binding</keyword>
<keyword id="KW-0862">Zinc</keyword>
<comment type="function">
    <text>Is required not only for elongation of protein synthesis but also for the initiation of all mRNA translation through initiator tRNA(fMet) aminoacylation.</text>
</comment>
<comment type="catalytic activity">
    <reaction>
        <text>tRNA(Met) + L-methionine + ATP = L-methionyl-tRNA(Met) + AMP + diphosphate</text>
        <dbReference type="Rhea" id="RHEA:13481"/>
        <dbReference type="Rhea" id="RHEA-COMP:9667"/>
        <dbReference type="Rhea" id="RHEA-COMP:9698"/>
        <dbReference type="ChEBI" id="CHEBI:30616"/>
        <dbReference type="ChEBI" id="CHEBI:33019"/>
        <dbReference type="ChEBI" id="CHEBI:57844"/>
        <dbReference type="ChEBI" id="CHEBI:78442"/>
        <dbReference type="ChEBI" id="CHEBI:78530"/>
        <dbReference type="ChEBI" id="CHEBI:456215"/>
        <dbReference type="EC" id="6.1.1.10"/>
    </reaction>
</comment>
<comment type="cofactor">
    <cofactor>
        <name>Zn(2+)</name>
        <dbReference type="ChEBI" id="CHEBI:29105"/>
    </cofactor>
    <text>Binds 1 zinc ion per subunit.</text>
</comment>
<comment type="subunit">
    <text>Homodimer.</text>
</comment>
<comment type="subcellular location">
    <subcellularLocation>
        <location>Cytoplasm</location>
    </subcellularLocation>
</comment>
<comment type="similarity">
    <text evidence="2">Belongs to the class-I aminoacyl-tRNA synthetase family. MetG type 2A subfamily.</text>
</comment>
<proteinExistence type="evidence at protein level"/>
<feature type="chain" id="PRO_0000139258" description="Methionine--tRNA ligase">
    <location>
        <begin position="1"/>
        <end position="618"/>
    </location>
</feature>
<feature type="domain" description="tRNA-binding">
    <location>
        <begin position="518"/>
        <end position="618"/>
    </location>
</feature>
<feature type="short sequence motif" description="'HIGH' region">
    <location>
        <begin position="12"/>
        <end position="22"/>
    </location>
</feature>
<feature type="short sequence motif" description="'KMSKS' region">
    <location>
        <begin position="297"/>
        <end position="301"/>
    </location>
</feature>
<feature type="binding site">
    <location>
        <position position="127"/>
    </location>
    <ligand>
        <name>Zn(2+)</name>
        <dbReference type="ChEBI" id="CHEBI:29105"/>
    </ligand>
</feature>
<feature type="binding site">
    <location>
        <position position="130"/>
    </location>
    <ligand>
        <name>Zn(2+)</name>
        <dbReference type="ChEBI" id="CHEBI:29105"/>
    </ligand>
</feature>
<feature type="binding site">
    <location>
        <position position="144"/>
    </location>
    <ligand>
        <name>Zn(2+)</name>
        <dbReference type="ChEBI" id="CHEBI:29105"/>
    </ligand>
</feature>
<feature type="binding site">
    <location>
        <position position="147"/>
    </location>
    <ligand>
        <name>Zn(2+)</name>
        <dbReference type="ChEBI" id="CHEBI:29105"/>
    </ligand>
</feature>
<feature type="binding site" evidence="1">
    <location>
        <position position="300"/>
    </location>
    <ligand>
        <name>ATP</name>
        <dbReference type="ChEBI" id="CHEBI:30616"/>
    </ligand>
</feature>
<feature type="sequence conflict" description="In Ref. 1; AAA27510." evidence="2" ref="1">
    <original>AVVK</original>
    <variation>RW</variation>
    <location>
        <begin position="615"/>
        <end position="618"/>
    </location>
</feature>
<feature type="strand" evidence="5">
    <location>
        <begin position="4"/>
        <end position="8"/>
    </location>
</feature>
<feature type="helix" evidence="5">
    <location>
        <begin position="20"/>
        <end position="38"/>
    </location>
</feature>
<feature type="strand" evidence="5">
    <location>
        <begin position="42"/>
        <end position="50"/>
    </location>
</feature>
<feature type="helix" evidence="5">
    <location>
        <begin position="54"/>
        <end position="63"/>
    </location>
</feature>
<feature type="helix" evidence="5">
    <location>
        <begin position="67"/>
        <end position="84"/>
    </location>
</feature>
<feature type="strand" evidence="5">
    <location>
        <begin position="90"/>
        <end position="94"/>
    </location>
</feature>
<feature type="helix" evidence="5">
    <location>
        <begin position="98"/>
        <end position="113"/>
    </location>
</feature>
<feature type="strand" evidence="5">
    <location>
        <begin position="117"/>
        <end position="127"/>
    </location>
</feature>
<feature type="turn" evidence="5">
    <location>
        <begin position="128"/>
        <end position="131"/>
    </location>
</feature>
<feature type="strand" evidence="3">
    <location>
        <begin position="132"/>
        <end position="134"/>
    </location>
</feature>
<feature type="turn" evidence="5">
    <location>
        <begin position="136"/>
        <end position="138"/>
    </location>
</feature>
<feature type="turn" evidence="5">
    <location>
        <begin position="145"/>
        <end position="147"/>
    </location>
</feature>
<feature type="strand" evidence="5">
    <location>
        <begin position="152"/>
        <end position="161"/>
    </location>
</feature>
<feature type="helix" evidence="5">
    <location>
        <begin position="163"/>
        <end position="166"/>
    </location>
</feature>
<feature type="helix" evidence="5">
    <location>
        <begin position="167"/>
        <end position="175"/>
    </location>
</feature>
<feature type="strand" evidence="5">
    <location>
        <begin position="180"/>
        <end position="183"/>
    </location>
</feature>
<feature type="helix" evidence="5">
    <location>
        <begin position="184"/>
        <end position="194"/>
    </location>
</feature>
<feature type="strand" evidence="5">
    <location>
        <begin position="204"/>
        <end position="206"/>
    </location>
</feature>
<feature type="turn" evidence="5">
    <location>
        <begin position="207"/>
        <end position="209"/>
    </location>
</feature>
<feature type="strand" evidence="5">
    <location>
        <begin position="219"/>
        <end position="224"/>
    </location>
</feature>
<feature type="helix" evidence="5">
    <location>
        <begin position="226"/>
        <end position="231"/>
    </location>
</feature>
<feature type="helix" evidence="5">
    <location>
        <begin position="233"/>
        <end position="236"/>
    </location>
</feature>
<feature type="turn" evidence="5">
    <location>
        <begin position="237"/>
        <end position="242"/>
    </location>
</feature>
<feature type="helix" evidence="5">
    <location>
        <begin position="244"/>
        <end position="249"/>
    </location>
</feature>
<feature type="helix" evidence="5">
    <location>
        <begin position="250"/>
        <end position="252"/>
    </location>
</feature>
<feature type="strand" evidence="5">
    <location>
        <begin position="253"/>
        <end position="258"/>
    </location>
</feature>
<feature type="helix" evidence="5">
    <location>
        <begin position="259"/>
        <end position="261"/>
    </location>
</feature>
<feature type="helix" evidence="5">
    <location>
        <begin position="262"/>
        <end position="266"/>
    </location>
</feature>
<feature type="helix" evidence="5">
    <location>
        <begin position="268"/>
        <end position="276"/>
    </location>
</feature>
<feature type="strand" evidence="5">
    <location>
        <begin position="282"/>
        <end position="287"/>
    </location>
</feature>
<feature type="turn" evidence="5">
    <location>
        <begin position="300"/>
        <end position="302"/>
    </location>
</feature>
<feature type="helix" evidence="5">
    <location>
        <begin position="308"/>
        <end position="315"/>
    </location>
</feature>
<feature type="helix" evidence="5">
    <location>
        <begin position="317"/>
        <end position="327"/>
    </location>
</feature>
<feature type="helix" evidence="5">
    <location>
        <begin position="338"/>
        <end position="348"/>
    </location>
</feature>
<feature type="helix" evidence="5">
    <location>
        <begin position="349"/>
        <end position="353"/>
    </location>
</feature>
<feature type="helix" evidence="5">
    <location>
        <begin position="354"/>
        <end position="367"/>
    </location>
</feature>
<feature type="helix" evidence="5">
    <location>
        <begin position="379"/>
        <end position="386"/>
    </location>
</feature>
<feature type="helix" evidence="5">
    <location>
        <begin position="387"/>
        <end position="396"/>
    </location>
</feature>
<feature type="helix" evidence="5">
    <location>
        <begin position="400"/>
        <end position="421"/>
    </location>
</feature>
<feature type="helix" evidence="5">
    <location>
        <begin position="423"/>
        <end position="426"/>
    </location>
</feature>
<feature type="turn" evidence="5">
    <location>
        <begin position="427"/>
        <end position="429"/>
    </location>
</feature>
<feature type="helix" evidence="5">
    <location>
        <begin position="431"/>
        <end position="452"/>
    </location>
</feature>
<feature type="turn" evidence="5">
    <location>
        <begin position="453"/>
        <end position="455"/>
    </location>
</feature>
<feature type="helix" evidence="5">
    <location>
        <begin position="457"/>
        <end position="466"/>
    </location>
</feature>
<feature type="helix" evidence="5">
    <location>
        <begin position="475"/>
        <end position="479"/>
    </location>
</feature>
<feature type="strand" evidence="4">
    <location>
        <begin position="480"/>
        <end position="482"/>
    </location>
</feature>
<evidence type="ECO:0000250" key="1"/>
<evidence type="ECO:0000305" key="2"/>
<evidence type="ECO:0007829" key="3">
    <source>
        <dbReference type="PDB" id="1A8H"/>
    </source>
</evidence>
<evidence type="ECO:0007829" key="4">
    <source>
        <dbReference type="PDB" id="2D54"/>
    </source>
</evidence>
<evidence type="ECO:0007829" key="5">
    <source>
        <dbReference type="PDB" id="2D5B"/>
    </source>
</evidence>
<dbReference type="EC" id="6.1.1.10"/>
<dbReference type="EMBL" id="M64273">
    <property type="protein sequence ID" value="AAA27510.1"/>
    <property type="molecule type" value="Genomic_DNA"/>
</dbReference>
<dbReference type="EMBL" id="AP008226">
    <property type="protein sequence ID" value="BAD71121.1"/>
    <property type="molecule type" value="Genomic_DNA"/>
</dbReference>
<dbReference type="RefSeq" id="WP_011228577.1">
    <property type="nucleotide sequence ID" value="NC_006461.1"/>
</dbReference>
<dbReference type="RefSeq" id="YP_144564.1">
    <property type="nucleotide sequence ID" value="NC_006461.1"/>
</dbReference>
<dbReference type="PDB" id="1A8H">
    <property type="method" value="X-ray"/>
    <property type="resolution" value="2.00 A"/>
    <property type="chains" value="A=1-500"/>
</dbReference>
<dbReference type="PDB" id="1WOY">
    <property type="method" value="X-ray"/>
    <property type="resolution" value="2.00 A"/>
    <property type="chains" value="A=1-500"/>
</dbReference>
<dbReference type="PDB" id="2D54">
    <property type="method" value="X-ray"/>
    <property type="resolution" value="2.00 A"/>
    <property type="chains" value="A=1-502"/>
</dbReference>
<dbReference type="PDB" id="2D5B">
    <property type="method" value="X-ray"/>
    <property type="resolution" value="1.80 A"/>
    <property type="chains" value="A=1-500"/>
</dbReference>
<dbReference type="PDB" id="3VU8">
    <property type="method" value="X-ray"/>
    <property type="resolution" value="2.20 A"/>
    <property type="chains" value="A=1-502"/>
</dbReference>
<dbReference type="PDBsum" id="1A8H"/>
<dbReference type="PDBsum" id="1WOY"/>
<dbReference type="PDBsum" id="2D54"/>
<dbReference type="PDBsum" id="2D5B"/>
<dbReference type="PDBsum" id="3VU8"/>
<dbReference type="SMR" id="P23395"/>
<dbReference type="ChEMBL" id="CHEMBL1641341"/>
<dbReference type="EnsemblBacteria" id="BAD71121">
    <property type="protein sequence ID" value="BAD71121"/>
    <property type="gene ID" value="BAD71121"/>
</dbReference>
<dbReference type="GeneID" id="3169329"/>
<dbReference type="KEGG" id="ttj:TTHA1298"/>
<dbReference type="PATRIC" id="fig|300852.9.peg.1276"/>
<dbReference type="eggNOG" id="COG0073">
    <property type="taxonomic scope" value="Bacteria"/>
</dbReference>
<dbReference type="eggNOG" id="COG0143">
    <property type="taxonomic scope" value="Bacteria"/>
</dbReference>
<dbReference type="HOGENOM" id="CLU_009710_9_4_0"/>
<dbReference type="PhylomeDB" id="P23395"/>
<dbReference type="EvolutionaryTrace" id="P23395"/>
<dbReference type="PRO" id="PR:P23395"/>
<dbReference type="Proteomes" id="UP000000532">
    <property type="component" value="Chromosome"/>
</dbReference>
<dbReference type="GO" id="GO:0005737">
    <property type="term" value="C:cytoplasm"/>
    <property type="evidence" value="ECO:0007669"/>
    <property type="project" value="UniProtKB-SubCell"/>
</dbReference>
<dbReference type="GO" id="GO:0005524">
    <property type="term" value="F:ATP binding"/>
    <property type="evidence" value="ECO:0007669"/>
    <property type="project" value="UniProtKB-UniRule"/>
</dbReference>
<dbReference type="GO" id="GO:0046872">
    <property type="term" value="F:metal ion binding"/>
    <property type="evidence" value="ECO:0007669"/>
    <property type="project" value="UniProtKB-KW"/>
</dbReference>
<dbReference type="GO" id="GO:0004825">
    <property type="term" value="F:methionine-tRNA ligase activity"/>
    <property type="evidence" value="ECO:0007669"/>
    <property type="project" value="UniProtKB-UniRule"/>
</dbReference>
<dbReference type="GO" id="GO:0000049">
    <property type="term" value="F:tRNA binding"/>
    <property type="evidence" value="ECO:0007669"/>
    <property type="project" value="UniProtKB-KW"/>
</dbReference>
<dbReference type="GO" id="GO:0006431">
    <property type="term" value="P:methionyl-tRNA aminoacylation"/>
    <property type="evidence" value="ECO:0007669"/>
    <property type="project" value="UniProtKB-UniRule"/>
</dbReference>
<dbReference type="CDD" id="cd07957">
    <property type="entry name" value="Anticodon_Ia_Met"/>
    <property type="match status" value="1"/>
</dbReference>
<dbReference type="CDD" id="cd00814">
    <property type="entry name" value="MetRS_core"/>
    <property type="match status" value="1"/>
</dbReference>
<dbReference type="CDD" id="cd02800">
    <property type="entry name" value="tRNA_bind_EcMetRS_like"/>
    <property type="match status" value="1"/>
</dbReference>
<dbReference type="FunFam" id="2.170.220.10:FF:000003">
    <property type="entry name" value="Methionine--tRNA ligase"/>
    <property type="match status" value="1"/>
</dbReference>
<dbReference type="FunFam" id="2.40.50.140:FF:000042">
    <property type="entry name" value="Methionine--tRNA ligase"/>
    <property type="match status" value="1"/>
</dbReference>
<dbReference type="Gene3D" id="2.170.220.10">
    <property type="match status" value="1"/>
</dbReference>
<dbReference type="Gene3D" id="3.40.50.620">
    <property type="entry name" value="HUPs"/>
    <property type="match status" value="1"/>
</dbReference>
<dbReference type="Gene3D" id="1.10.730.10">
    <property type="entry name" value="Isoleucyl-tRNA Synthetase, Domain 1"/>
    <property type="match status" value="1"/>
</dbReference>
<dbReference type="Gene3D" id="2.40.50.140">
    <property type="entry name" value="Nucleic acid-binding proteins"/>
    <property type="match status" value="1"/>
</dbReference>
<dbReference type="HAMAP" id="MF_01228">
    <property type="entry name" value="Met_tRNA_synth_type2"/>
    <property type="match status" value="1"/>
</dbReference>
<dbReference type="InterPro" id="IPR041872">
    <property type="entry name" value="Anticodon_Met"/>
</dbReference>
<dbReference type="InterPro" id="IPR004495">
    <property type="entry name" value="Met-tRNA-synth_bsu_C"/>
</dbReference>
<dbReference type="InterPro" id="IPR014758">
    <property type="entry name" value="Met-tRNA_synth"/>
</dbReference>
<dbReference type="InterPro" id="IPR023457">
    <property type="entry name" value="Met-tRNA_synth_2"/>
</dbReference>
<dbReference type="InterPro" id="IPR015413">
    <property type="entry name" value="Methionyl/Leucyl_tRNA_Synth"/>
</dbReference>
<dbReference type="InterPro" id="IPR033911">
    <property type="entry name" value="MetRS_core"/>
</dbReference>
<dbReference type="InterPro" id="IPR012340">
    <property type="entry name" value="NA-bd_OB-fold"/>
</dbReference>
<dbReference type="InterPro" id="IPR014729">
    <property type="entry name" value="Rossmann-like_a/b/a_fold"/>
</dbReference>
<dbReference type="InterPro" id="IPR002547">
    <property type="entry name" value="tRNA-bd_dom"/>
</dbReference>
<dbReference type="InterPro" id="IPR009080">
    <property type="entry name" value="tRNAsynth_Ia_anticodon-bd"/>
</dbReference>
<dbReference type="NCBIfam" id="TIGR00398">
    <property type="entry name" value="metG"/>
    <property type="match status" value="1"/>
</dbReference>
<dbReference type="NCBIfam" id="TIGR00399">
    <property type="entry name" value="metG_C_term"/>
    <property type="match status" value="1"/>
</dbReference>
<dbReference type="NCBIfam" id="NF008900">
    <property type="entry name" value="PRK12267.1"/>
    <property type="match status" value="1"/>
</dbReference>
<dbReference type="PANTHER" id="PTHR43326:SF1">
    <property type="entry name" value="METHIONINE--TRNA LIGASE, MITOCHONDRIAL"/>
    <property type="match status" value="1"/>
</dbReference>
<dbReference type="PANTHER" id="PTHR43326">
    <property type="entry name" value="METHIONYL-TRNA SYNTHETASE"/>
    <property type="match status" value="1"/>
</dbReference>
<dbReference type="Pfam" id="PF19303">
    <property type="entry name" value="Anticodon_3"/>
    <property type="match status" value="1"/>
</dbReference>
<dbReference type="Pfam" id="PF09334">
    <property type="entry name" value="tRNA-synt_1g"/>
    <property type="match status" value="1"/>
</dbReference>
<dbReference type="Pfam" id="PF01588">
    <property type="entry name" value="tRNA_bind"/>
    <property type="match status" value="1"/>
</dbReference>
<dbReference type="PRINTS" id="PR01041">
    <property type="entry name" value="TRNASYNTHMET"/>
</dbReference>
<dbReference type="SUPFAM" id="SSF47323">
    <property type="entry name" value="Anticodon-binding domain of a subclass of class I aminoacyl-tRNA synthetases"/>
    <property type="match status" value="1"/>
</dbReference>
<dbReference type="SUPFAM" id="SSF50249">
    <property type="entry name" value="Nucleic acid-binding proteins"/>
    <property type="match status" value="1"/>
</dbReference>
<dbReference type="SUPFAM" id="SSF52374">
    <property type="entry name" value="Nucleotidylyl transferase"/>
    <property type="match status" value="1"/>
</dbReference>
<dbReference type="PROSITE" id="PS50886">
    <property type="entry name" value="TRBD"/>
    <property type="match status" value="1"/>
</dbReference>
<sequence length="618" mass="70693">MEKVFYVTTPIYYVNAEPHLGHAYTTVVADFLARWHRLDGYRTFFLTGTDEHGETVYRAAQAAGEDPKAFVDRVSGRFKRAWDLLGIAYDDFIRTTEERHKKVVQLVLKKVYEAGDIYYGEYEGLYCVSCERFYTEKELVEGLCPIHGRPVERRKEGNYFFRMEKYRPWLQEYIQENPDLIRPEGYRNEVLAMLAEPIGDLSISRPKSRVPWGIPLPWDENHVTYVWFDALLNYVSALDYPEGEAYRTFWPHAWHLIGKDILKPHAVFWPTMLKAAGIPMYRHLNVGGFLLGPDGRKMSKTLGNVVDPFALLEKYGRDALRYYLLREIPYGQDTPVSEEALRTRYEADLADDLGNLVQRTRAMLFRFAEGRIPEPVAGEELAEGTGLAGRLRPLVRELKFHVALEEAMAYVKALNRYINEKKPWELFKKEPEEARAVLYRVVEGLRIASILLTPAMPDKMAELRRALGLKEEVRLEEAERWGLAEPRPIPEEAPVLFPKKEAKVEAKPKEEAWIGIEDFAKVELRVAEVLAAEKHPNADRLLVLRLSLGNEERTVVSGIAKWYRPEELVGKKVVLVANLKPAKLRGIESQGMILAAQEGEALALVTVEGEVPPGAVVK</sequence>